<dbReference type="EMBL" id="AF141386">
    <property type="protein sequence ID" value="AAD38940.2"/>
    <property type="status" value="ALT_TERM"/>
    <property type="molecule type" value="mRNA"/>
</dbReference>
<dbReference type="SMR" id="Q9WVC1"/>
<dbReference type="FunCoup" id="Q9WVC1">
    <property type="interactions" value="88"/>
</dbReference>
<dbReference type="IntAct" id="Q9WVC1">
    <property type="interactions" value="1"/>
</dbReference>
<dbReference type="STRING" id="10116.ENSRNOP00000005477"/>
<dbReference type="GlyCosmos" id="Q9WVC1">
    <property type="glycosylation" value="4 sites, No reported glycans"/>
</dbReference>
<dbReference type="GlyGen" id="Q9WVC1">
    <property type="glycosylation" value="4 sites"/>
</dbReference>
<dbReference type="PhosphoSitePlus" id="Q9WVC1"/>
<dbReference type="PaxDb" id="10116-ENSRNOP00000005477"/>
<dbReference type="AGR" id="RGD:69310"/>
<dbReference type="RGD" id="69310">
    <property type="gene designation" value="Slit2"/>
</dbReference>
<dbReference type="eggNOG" id="KOG4237">
    <property type="taxonomic scope" value="Eukaryota"/>
</dbReference>
<dbReference type="InParanoid" id="Q9WVC1"/>
<dbReference type="PhylomeDB" id="Q9WVC1"/>
<dbReference type="Proteomes" id="UP000002494">
    <property type="component" value="Unplaced"/>
</dbReference>
<dbReference type="GO" id="GO:0030424">
    <property type="term" value="C:axon"/>
    <property type="evidence" value="ECO:0000314"/>
    <property type="project" value="RGD"/>
</dbReference>
<dbReference type="GO" id="GO:0044297">
    <property type="term" value="C:cell body"/>
    <property type="evidence" value="ECO:0000314"/>
    <property type="project" value="RGD"/>
</dbReference>
<dbReference type="GO" id="GO:0042995">
    <property type="term" value="C:cell projection"/>
    <property type="evidence" value="ECO:0000314"/>
    <property type="project" value="RGD"/>
</dbReference>
<dbReference type="GO" id="GO:0005737">
    <property type="term" value="C:cytoplasm"/>
    <property type="evidence" value="ECO:0000266"/>
    <property type="project" value="RGD"/>
</dbReference>
<dbReference type="GO" id="GO:0030425">
    <property type="term" value="C:dendrite"/>
    <property type="evidence" value="ECO:0000314"/>
    <property type="project" value="RGD"/>
</dbReference>
<dbReference type="GO" id="GO:0005615">
    <property type="term" value="C:extracellular space"/>
    <property type="evidence" value="ECO:0000266"/>
    <property type="project" value="RGD"/>
</dbReference>
<dbReference type="GO" id="GO:0016020">
    <property type="term" value="C:membrane"/>
    <property type="evidence" value="ECO:0007669"/>
    <property type="project" value="InterPro"/>
</dbReference>
<dbReference type="GO" id="GO:0043025">
    <property type="term" value="C:neuronal cell body"/>
    <property type="evidence" value="ECO:0000314"/>
    <property type="project" value="RGD"/>
</dbReference>
<dbReference type="GO" id="GO:0098966">
    <property type="term" value="C:perisynaptic extracellular matrix"/>
    <property type="evidence" value="ECO:0000314"/>
    <property type="project" value="SynGO"/>
</dbReference>
<dbReference type="GO" id="GO:0045499">
    <property type="term" value="F:chemorepellent activity"/>
    <property type="evidence" value="ECO:0000266"/>
    <property type="project" value="RGD"/>
</dbReference>
<dbReference type="GO" id="GO:0004963">
    <property type="term" value="F:follicle-stimulating hormone receptor activity"/>
    <property type="evidence" value="ECO:0007669"/>
    <property type="project" value="InterPro"/>
</dbReference>
<dbReference type="GO" id="GO:0005095">
    <property type="term" value="F:GTPase inhibitor activity"/>
    <property type="evidence" value="ECO:0000266"/>
    <property type="project" value="RGD"/>
</dbReference>
<dbReference type="GO" id="GO:0043395">
    <property type="term" value="F:heparan sulfate proteoglycan binding"/>
    <property type="evidence" value="ECO:0000314"/>
    <property type="project" value="RGD"/>
</dbReference>
<dbReference type="GO" id="GO:0008201">
    <property type="term" value="F:heparin binding"/>
    <property type="evidence" value="ECO:0000266"/>
    <property type="project" value="RGD"/>
</dbReference>
<dbReference type="GO" id="GO:0042802">
    <property type="term" value="F:identical protein binding"/>
    <property type="evidence" value="ECO:0000266"/>
    <property type="project" value="RGD"/>
</dbReference>
<dbReference type="GO" id="GO:0043237">
    <property type="term" value="F:laminin-1 binding"/>
    <property type="evidence" value="ECO:0000266"/>
    <property type="project" value="RGD"/>
</dbReference>
<dbReference type="GO" id="GO:0042803">
    <property type="term" value="F:protein homodimerization activity"/>
    <property type="evidence" value="ECO:0000266"/>
    <property type="project" value="RGD"/>
</dbReference>
<dbReference type="GO" id="GO:0043394">
    <property type="term" value="F:proteoglycan binding"/>
    <property type="evidence" value="ECO:0000266"/>
    <property type="project" value="RGD"/>
</dbReference>
<dbReference type="GO" id="GO:0048495">
    <property type="term" value="F:Roundabout binding"/>
    <property type="evidence" value="ECO:0000266"/>
    <property type="project" value="RGD"/>
</dbReference>
<dbReference type="GO" id="GO:0003180">
    <property type="term" value="P:aortic valve morphogenesis"/>
    <property type="evidence" value="ECO:0000266"/>
    <property type="project" value="RGD"/>
</dbReference>
<dbReference type="GO" id="GO:0061364">
    <property type="term" value="P:apoptotic process involved in luteolysis"/>
    <property type="evidence" value="ECO:0000266"/>
    <property type="project" value="RGD"/>
</dbReference>
<dbReference type="GO" id="GO:0048846">
    <property type="term" value="P:axon extension involved in axon guidance"/>
    <property type="evidence" value="ECO:0000266"/>
    <property type="project" value="RGD"/>
</dbReference>
<dbReference type="GO" id="GO:0007411">
    <property type="term" value="P:axon guidance"/>
    <property type="evidence" value="ECO:0000266"/>
    <property type="project" value="RGD"/>
</dbReference>
<dbReference type="GO" id="GO:0007409">
    <property type="term" value="P:axonogenesis"/>
    <property type="evidence" value="ECO:0000266"/>
    <property type="project" value="RGD"/>
</dbReference>
<dbReference type="GO" id="GO:0048754">
    <property type="term" value="P:branching morphogenesis of an epithelial tube"/>
    <property type="evidence" value="ECO:0000266"/>
    <property type="project" value="RGD"/>
</dbReference>
<dbReference type="GO" id="GO:0002042">
    <property type="term" value="P:cell migration involved in sprouting angiogenesis"/>
    <property type="evidence" value="ECO:0000266"/>
    <property type="project" value="RGD"/>
</dbReference>
<dbReference type="GO" id="GO:0098609">
    <property type="term" value="P:cell-cell adhesion"/>
    <property type="evidence" value="ECO:0000266"/>
    <property type="project" value="RGD"/>
</dbReference>
<dbReference type="GO" id="GO:0071504">
    <property type="term" value="P:cellular response to heparin"/>
    <property type="evidence" value="ECO:0000266"/>
    <property type="project" value="RGD"/>
</dbReference>
<dbReference type="GO" id="GO:0032870">
    <property type="term" value="P:cellular response to hormone stimulus"/>
    <property type="evidence" value="ECO:0000266"/>
    <property type="project" value="RGD"/>
</dbReference>
<dbReference type="GO" id="GO:0071456">
    <property type="term" value="P:cellular response to hypoxia"/>
    <property type="evidence" value="ECO:0000270"/>
    <property type="project" value="RGD"/>
</dbReference>
<dbReference type="GO" id="GO:0036120">
    <property type="term" value="P:cellular response to platelet-derived growth factor stimulus"/>
    <property type="evidence" value="ECO:0000270"/>
    <property type="project" value="RGD"/>
</dbReference>
<dbReference type="GO" id="GO:0021836">
    <property type="term" value="P:chemorepulsion involved in postnatal olfactory bulb interneuron migration"/>
    <property type="evidence" value="ECO:0000266"/>
    <property type="project" value="RGD"/>
</dbReference>
<dbReference type="GO" id="GO:0021972">
    <property type="term" value="P:corticospinal neuron axon guidance through spinal cord"/>
    <property type="evidence" value="ECO:0000266"/>
    <property type="project" value="RGD"/>
</dbReference>
<dbReference type="GO" id="GO:0033563">
    <property type="term" value="P:dorsal/ventral axon guidance"/>
    <property type="evidence" value="ECO:0000266"/>
    <property type="project" value="RGD"/>
</dbReference>
<dbReference type="GO" id="GO:0001701">
    <property type="term" value="P:in utero embryonic development"/>
    <property type="evidence" value="ECO:0000266"/>
    <property type="project" value="RGD"/>
</dbReference>
<dbReference type="GO" id="GO:0050929">
    <property type="term" value="P:induction of negative chemotaxis"/>
    <property type="evidence" value="ECO:0000266"/>
    <property type="project" value="RGD"/>
</dbReference>
<dbReference type="GO" id="GO:0001822">
    <property type="term" value="P:kidney development"/>
    <property type="evidence" value="ECO:0000266"/>
    <property type="project" value="RGD"/>
</dbReference>
<dbReference type="GO" id="GO:0060763">
    <property type="term" value="P:mammary duct terminal end bud growth"/>
    <property type="evidence" value="ECO:0000266"/>
    <property type="project" value="RGD"/>
</dbReference>
<dbReference type="GO" id="GO:0060603">
    <property type="term" value="P:mammary gland duct morphogenesis"/>
    <property type="evidence" value="ECO:0000266"/>
    <property type="project" value="RGD"/>
</dbReference>
<dbReference type="GO" id="GO:0001656">
    <property type="term" value="P:metanephros development"/>
    <property type="evidence" value="ECO:0000266"/>
    <property type="project" value="RGD"/>
</dbReference>
<dbReference type="GO" id="GO:0008045">
    <property type="term" value="P:motor neuron axon guidance"/>
    <property type="evidence" value="ECO:0000266"/>
    <property type="project" value="RGD"/>
</dbReference>
<dbReference type="GO" id="GO:0050919">
    <property type="term" value="P:negative chemotaxis"/>
    <property type="evidence" value="ECO:0000266"/>
    <property type="project" value="RGD"/>
</dbReference>
<dbReference type="GO" id="GO:0030837">
    <property type="term" value="P:negative regulation of actin filament polymerization"/>
    <property type="evidence" value="ECO:0000266"/>
    <property type="project" value="RGD"/>
</dbReference>
<dbReference type="GO" id="GO:0030517">
    <property type="term" value="P:negative regulation of axon extension"/>
    <property type="evidence" value="ECO:0000266"/>
    <property type="project" value="RGD"/>
</dbReference>
<dbReference type="GO" id="GO:0030308">
    <property type="term" value="P:negative regulation of cell growth"/>
    <property type="evidence" value="ECO:0000266"/>
    <property type="project" value="RGD"/>
</dbReference>
<dbReference type="GO" id="GO:0030336">
    <property type="term" value="P:negative regulation of cell migration"/>
    <property type="evidence" value="ECO:0000266"/>
    <property type="project" value="RGD"/>
</dbReference>
<dbReference type="GO" id="GO:0008285">
    <property type="term" value="P:negative regulation of cell population proliferation"/>
    <property type="evidence" value="ECO:0000266"/>
    <property type="project" value="RGD"/>
</dbReference>
<dbReference type="GO" id="GO:0090288">
    <property type="term" value="P:negative regulation of cellular response to growth factor stimulus"/>
    <property type="evidence" value="ECO:0000266"/>
    <property type="project" value="RGD"/>
</dbReference>
<dbReference type="GO" id="GO:0070100">
    <property type="term" value="P:negative regulation of chemokine-mediated signaling pathway"/>
    <property type="evidence" value="ECO:0000266"/>
    <property type="project" value="RGD"/>
</dbReference>
<dbReference type="GO" id="GO:0010596">
    <property type="term" value="P:negative regulation of endothelial cell migration"/>
    <property type="evidence" value="ECO:0000266"/>
    <property type="project" value="RGD"/>
</dbReference>
<dbReference type="GO" id="GO:0010629">
    <property type="term" value="P:negative regulation of gene expression"/>
    <property type="evidence" value="ECO:0000266"/>
    <property type="project" value="RGD"/>
</dbReference>
<dbReference type="GO" id="GO:0010593">
    <property type="term" value="P:negative regulation of lamellipodium assembly"/>
    <property type="evidence" value="ECO:0000266"/>
    <property type="project" value="RGD"/>
</dbReference>
<dbReference type="GO" id="GO:0002689">
    <property type="term" value="P:negative regulation of leukocyte chemotaxis"/>
    <property type="evidence" value="ECO:0000266"/>
    <property type="project" value="RGD"/>
</dbReference>
<dbReference type="GO" id="GO:0090027">
    <property type="term" value="P:negative regulation of monocyte chemotaxis"/>
    <property type="evidence" value="ECO:0000314"/>
    <property type="project" value="BHF-UCL"/>
</dbReference>
<dbReference type="GO" id="GO:0071676">
    <property type="term" value="P:negative regulation of mononuclear cell migration"/>
    <property type="evidence" value="ECO:0000266"/>
    <property type="project" value="RGD"/>
</dbReference>
<dbReference type="GO" id="GO:0090024">
    <property type="term" value="P:negative regulation of neutrophil chemotaxis"/>
    <property type="evidence" value="ECO:0000266"/>
    <property type="project" value="RGD"/>
</dbReference>
<dbReference type="GO" id="GO:0090260">
    <property type="term" value="P:negative regulation of retinal ganglion cell axon guidance"/>
    <property type="evidence" value="ECO:0000266"/>
    <property type="project" value="RGD"/>
</dbReference>
<dbReference type="GO" id="GO:0051058">
    <property type="term" value="P:negative regulation of small GTPase mediated signal transduction"/>
    <property type="evidence" value="ECO:0000266"/>
    <property type="project" value="RGD"/>
</dbReference>
<dbReference type="GO" id="GO:0071672">
    <property type="term" value="P:negative regulation of smooth muscle cell chemotaxis"/>
    <property type="evidence" value="ECO:0000266"/>
    <property type="project" value="RGD"/>
</dbReference>
<dbReference type="GO" id="GO:0014912">
    <property type="term" value="P:negative regulation of smooth muscle cell migration"/>
    <property type="evidence" value="ECO:0000266"/>
    <property type="project" value="RGD"/>
</dbReference>
<dbReference type="GO" id="GO:0043116">
    <property type="term" value="P:negative regulation of vascular permeability"/>
    <property type="evidence" value="ECO:0000266"/>
    <property type="project" value="RGD"/>
</dbReference>
<dbReference type="GO" id="GO:1990138">
    <property type="term" value="P:neuron projection extension"/>
    <property type="evidence" value="ECO:0000315"/>
    <property type="project" value="RGD"/>
</dbReference>
<dbReference type="GO" id="GO:0048812">
    <property type="term" value="P:neuron projection morphogenesis"/>
    <property type="evidence" value="ECO:0000266"/>
    <property type="project" value="RGD"/>
</dbReference>
<dbReference type="GO" id="GO:0021772">
    <property type="term" value="P:olfactory bulb development"/>
    <property type="evidence" value="ECO:0000266"/>
    <property type="project" value="RGD"/>
</dbReference>
<dbReference type="GO" id="GO:0043065">
    <property type="term" value="P:positive regulation of apoptotic process"/>
    <property type="evidence" value="ECO:0000266"/>
    <property type="project" value="RGD"/>
</dbReference>
<dbReference type="GO" id="GO:0051965">
    <property type="term" value="P:positive regulation of synapse assembly"/>
    <property type="evidence" value="ECO:0000315"/>
    <property type="project" value="RGD"/>
</dbReference>
<dbReference type="GO" id="GO:0003184">
    <property type="term" value="P:pulmonary valve morphogenesis"/>
    <property type="evidence" value="ECO:0000266"/>
    <property type="project" value="RGD"/>
</dbReference>
<dbReference type="GO" id="GO:0051414">
    <property type="term" value="P:response to cortisol"/>
    <property type="evidence" value="ECO:0000266"/>
    <property type="project" value="RGD"/>
</dbReference>
<dbReference type="GO" id="GO:0031667">
    <property type="term" value="P:response to nutrient levels"/>
    <property type="evidence" value="ECO:0000270"/>
    <property type="project" value="RGD"/>
</dbReference>
<dbReference type="GO" id="GO:0031290">
    <property type="term" value="P:retinal ganglion cell axon guidance"/>
    <property type="evidence" value="ECO:0000266"/>
    <property type="project" value="RGD"/>
</dbReference>
<dbReference type="GO" id="GO:0035385">
    <property type="term" value="P:Roundabout signaling pathway"/>
    <property type="evidence" value="ECO:0000266"/>
    <property type="project" value="RGD"/>
</dbReference>
<dbReference type="GO" id="GO:0021510">
    <property type="term" value="P:spinal cord development"/>
    <property type="evidence" value="ECO:0000270"/>
    <property type="project" value="RGD"/>
</dbReference>
<dbReference type="GO" id="GO:0060074">
    <property type="term" value="P:synapse maturation"/>
    <property type="evidence" value="ECO:0000314"/>
    <property type="project" value="SynGO"/>
</dbReference>
<dbReference type="GO" id="GO:0022029">
    <property type="term" value="P:telencephalon cell migration"/>
    <property type="evidence" value="ECO:0000266"/>
    <property type="project" value="RGD"/>
</dbReference>
<dbReference type="GO" id="GO:0001657">
    <property type="term" value="P:ureteric bud development"/>
    <property type="evidence" value="ECO:0000266"/>
    <property type="project" value="RGD"/>
</dbReference>
<dbReference type="GO" id="GO:0060412">
    <property type="term" value="P:ventricular septum morphogenesis"/>
    <property type="evidence" value="ECO:0000266"/>
    <property type="project" value="RGD"/>
</dbReference>
<dbReference type="FunFam" id="3.80.10.10:FF:000002">
    <property type="entry name" value="Slit guidance ligand 2"/>
    <property type="match status" value="2"/>
</dbReference>
<dbReference type="FunFam" id="3.80.10.10:FF:000376">
    <property type="entry name" value="Slit guidance ligand 2"/>
    <property type="match status" value="1"/>
</dbReference>
<dbReference type="FunFam" id="3.80.10.10:FF:000032">
    <property type="entry name" value="Slit homolog 2 (Drosophila)"/>
    <property type="match status" value="1"/>
</dbReference>
<dbReference type="Gene3D" id="3.80.10.10">
    <property type="entry name" value="Ribonuclease Inhibitor"/>
    <property type="match status" value="5"/>
</dbReference>
<dbReference type="InterPro" id="IPR000483">
    <property type="entry name" value="Cys-rich_flank_reg_C"/>
</dbReference>
<dbReference type="InterPro" id="IPR002272">
    <property type="entry name" value="FSH_rcpt"/>
</dbReference>
<dbReference type="InterPro" id="IPR001611">
    <property type="entry name" value="Leu-rich_rpt"/>
</dbReference>
<dbReference type="InterPro" id="IPR003591">
    <property type="entry name" value="Leu-rich_rpt_typical-subtyp"/>
</dbReference>
<dbReference type="InterPro" id="IPR032675">
    <property type="entry name" value="LRR_dom_sf"/>
</dbReference>
<dbReference type="InterPro" id="IPR050541">
    <property type="entry name" value="LRR_TM_domain-containing"/>
</dbReference>
<dbReference type="InterPro" id="IPR000372">
    <property type="entry name" value="LRRNT"/>
</dbReference>
<dbReference type="PANTHER" id="PTHR24369">
    <property type="entry name" value="ANTIGEN BSP, PUTATIVE-RELATED"/>
    <property type="match status" value="1"/>
</dbReference>
<dbReference type="PANTHER" id="PTHR24369:SF210">
    <property type="entry name" value="CHAOPTIN-RELATED"/>
    <property type="match status" value="1"/>
</dbReference>
<dbReference type="Pfam" id="PF13855">
    <property type="entry name" value="LRR_8"/>
    <property type="match status" value="6"/>
</dbReference>
<dbReference type="Pfam" id="PF01463">
    <property type="entry name" value="LRRCT"/>
    <property type="match status" value="3"/>
</dbReference>
<dbReference type="Pfam" id="PF01462">
    <property type="entry name" value="LRRNT"/>
    <property type="match status" value="4"/>
</dbReference>
<dbReference type="PRINTS" id="PR01143">
    <property type="entry name" value="FSHRECEPTOR"/>
</dbReference>
<dbReference type="PRINTS" id="PR00019">
    <property type="entry name" value="LEURICHRPT"/>
</dbReference>
<dbReference type="SMART" id="SM00369">
    <property type="entry name" value="LRR_TYP"/>
    <property type="match status" value="14"/>
</dbReference>
<dbReference type="SMART" id="SM00082">
    <property type="entry name" value="LRRCT"/>
    <property type="match status" value="3"/>
</dbReference>
<dbReference type="SMART" id="SM00013">
    <property type="entry name" value="LRRNT"/>
    <property type="match status" value="4"/>
</dbReference>
<dbReference type="SUPFAM" id="SSF52058">
    <property type="entry name" value="L domain-like"/>
    <property type="match status" value="3"/>
</dbReference>
<dbReference type="PROSITE" id="PS51450">
    <property type="entry name" value="LRR"/>
    <property type="match status" value="16"/>
</dbReference>
<gene>
    <name type="primary">Slit2</name>
</gene>
<evidence type="ECO:0000250" key="1"/>
<evidence type="ECO:0000255" key="2"/>
<evidence type="ECO:0000269" key="3">
    <source>
    </source>
</evidence>
<evidence type="ECO:0000269" key="4">
    <source>
    </source>
</evidence>
<evidence type="ECO:0000305" key="5"/>
<proteinExistence type="evidence at protein level"/>
<accession>Q9WVC1</accession>
<keyword id="KW-0145">Chemotaxis</keyword>
<keyword id="KW-0217">Developmental protein</keyword>
<keyword id="KW-0221">Differentiation</keyword>
<keyword id="KW-1015">Disulfide bond</keyword>
<keyword id="KW-0325">Glycoprotein</keyword>
<keyword id="KW-0358">Heparin-binding</keyword>
<keyword id="KW-0433">Leucine-rich repeat</keyword>
<keyword id="KW-0524">Neurogenesis</keyword>
<keyword id="KW-1185">Reference proteome</keyword>
<keyword id="KW-0677">Repeat</keyword>
<keyword id="KW-0964">Secreted</keyword>
<keyword id="KW-0732">Signal</keyword>
<feature type="signal peptide" evidence="2">
    <location>
        <begin position="1"/>
        <end position="30"/>
    </location>
</feature>
<feature type="chain" id="PRO_0000007731" description="Slit homolog 2 protein">
    <location>
        <begin position="31"/>
        <end position="766"/>
    </location>
</feature>
<feature type="domain" description="LRRNT">
    <location>
        <begin position="31"/>
        <end position="55"/>
    </location>
</feature>
<feature type="repeat" description="LRR 1">
    <location>
        <begin position="56"/>
        <end position="77"/>
    </location>
</feature>
<feature type="repeat" description="LRR 2">
    <location>
        <begin position="80"/>
        <end position="101"/>
    </location>
</feature>
<feature type="repeat" description="LRR 3">
    <location>
        <begin position="104"/>
        <end position="125"/>
    </location>
</feature>
<feature type="repeat" description="LRR 4">
    <location>
        <begin position="128"/>
        <end position="149"/>
    </location>
</feature>
<feature type="repeat" description="LRR 5">
    <location>
        <begin position="152"/>
        <end position="173"/>
    </location>
</feature>
<feature type="repeat" description="LRR 6">
    <location>
        <begin position="176"/>
        <end position="197"/>
    </location>
</feature>
<feature type="domain" description="LRRCT 1">
    <location>
        <begin position="209"/>
        <end position="259"/>
    </location>
</feature>
<feature type="domain" description="LRRNT 2">
    <location>
        <begin position="268"/>
        <end position="304"/>
    </location>
</feature>
<feature type="repeat" description="LRR 7">
    <location>
        <begin position="305"/>
        <end position="326"/>
    </location>
</feature>
<feature type="repeat" description="LRR 8">
    <location>
        <begin position="329"/>
        <end position="350"/>
    </location>
</feature>
<feature type="repeat" description="LRR 9">
    <location>
        <begin position="353"/>
        <end position="374"/>
    </location>
</feature>
<feature type="repeat" description="LRR 10">
    <location>
        <begin position="377"/>
        <end position="398"/>
    </location>
</feature>
<feature type="repeat" description="LRR 11">
    <location>
        <begin position="401"/>
        <end position="422"/>
    </location>
</feature>
<feature type="domain" description="LRRCT 2">
    <location>
        <begin position="434"/>
        <end position="484"/>
    </location>
</feature>
<feature type="domain" description="LRRNT 3">
    <location>
        <begin position="493"/>
        <end position="529"/>
    </location>
</feature>
<feature type="repeat" description="LRR 12">
    <location>
        <begin position="530"/>
        <end position="551"/>
    </location>
</feature>
<feature type="repeat" description="LRR 13">
    <location>
        <begin position="555"/>
        <end position="576"/>
    </location>
</feature>
<feature type="repeat" description="LRR 14">
    <location>
        <begin position="579"/>
        <end position="600"/>
    </location>
</feature>
<feature type="repeat" description="LRR 15">
    <location>
        <begin position="603"/>
        <end position="624"/>
    </location>
</feature>
<feature type="repeat" description="LRR 16">
    <location>
        <begin position="627"/>
        <end position="648"/>
    </location>
</feature>
<feature type="domain" description="LRRCT 3">
    <location>
        <begin position="660"/>
        <end position="710"/>
    </location>
</feature>
<feature type="domain" description="LRRNT 4">
    <location>
        <begin position="714"/>
        <end position="750"/>
    </location>
</feature>
<feature type="glycosylation site" description="N-linked (GlcNAc...) asparagine" evidence="2">
    <location>
        <position position="66"/>
    </location>
</feature>
<feature type="glycosylation site" description="N-linked (GlcNAc...) asparagine" evidence="2">
    <location>
        <position position="186"/>
    </location>
</feature>
<feature type="glycosylation site" description="N-linked (GlcNAc...) asparagine" evidence="2">
    <location>
        <position position="560"/>
    </location>
</feature>
<feature type="glycosylation site" description="N-linked (GlcNAc...) asparagine" evidence="2">
    <location>
        <position position="619"/>
    </location>
</feature>
<feature type="disulfide bond" evidence="1">
    <location>
        <begin position="281"/>
        <end position="290"/>
    </location>
</feature>
<feature type="disulfide bond" evidence="1">
    <location>
        <begin position="438"/>
        <end position="461"/>
    </location>
</feature>
<feature type="disulfide bond" evidence="1">
    <location>
        <begin position="440"/>
        <end position="482"/>
    </location>
</feature>
<feature type="disulfide bond" evidence="1">
    <location>
        <begin position="502"/>
        <end position="508"/>
    </location>
</feature>
<feature type="disulfide bond" evidence="1">
    <location>
        <begin position="506"/>
        <end position="515"/>
    </location>
</feature>
<feature type="disulfide bond" evidence="1">
    <location>
        <begin position="664"/>
        <end position="687"/>
    </location>
</feature>
<feature type="disulfide bond" evidence="1">
    <location>
        <begin position="666"/>
        <end position="708"/>
    </location>
</feature>
<feature type="disulfide bond" evidence="1">
    <location>
        <begin position="723"/>
        <end position="729"/>
    </location>
</feature>
<feature type="disulfide bond" evidence="1">
    <location>
        <begin position="727"/>
        <end position="736"/>
    </location>
</feature>
<feature type="non-terminal residue">
    <location>
        <position position="766"/>
    </location>
</feature>
<reference key="1">
    <citation type="journal article" date="1999" name="J. Biol. Chem.">
        <title>Mammalian homologues of the Drosophila slit protein are ligands of the heparan sulfate proteoglycan glypican-1 in brain.</title>
        <authorList>
            <person name="Liang Y."/>
            <person name="Annan R.S."/>
            <person name="Carr S.A."/>
            <person name="Popp S."/>
            <person name="Mevissen M."/>
            <person name="Margolis R.K."/>
            <person name="Margolis R.U."/>
        </authorList>
    </citation>
    <scope>NUCLEOTIDE SEQUENCE [MRNA]</scope>
    <source>
        <strain>Sprague-Dawley</strain>
    </source>
</reference>
<reference key="2">
    <citation type="journal article" date="2002" name="J. Comp. Neurol.">
        <title>Spatiotemporal expression patterns of slit and robo genes in the rat brain.</title>
        <authorList>
            <person name="Marillat V."/>
            <person name="Cases O."/>
            <person name="Nguyen-Ba-Charvet K.T."/>
            <person name="Tessier-Lavigne M."/>
            <person name="Sotelo C."/>
            <person name="Chedotal A."/>
        </authorList>
    </citation>
    <scope>DEVELOPMENTAL STAGE</scope>
</reference>
<reference key="3">
    <citation type="journal article" date="2004" name="J. Immunol.">
        <title>Bone morphogenetic protein antagonists Drm/Gremlin and Dan interact with Slits and act as negative regulators of monocyte chemotaxis.</title>
        <authorList>
            <person name="Chen B."/>
            <person name="Blair D.G."/>
            <person name="Plisov S."/>
            <person name="Vasiliev G."/>
            <person name="Perantoni A.O."/>
            <person name="Chen Q."/>
            <person name="Athanasiou M."/>
            <person name="Wu J.Y."/>
            <person name="Oppenheim J.J."/>
            <person name="Yang D."/>
        </authorList>
    </citation>
    <scope>INTERACTION WITH GREM1</scope>
</reference>
<comment type="function">
    <text evidence="1">Thought to act as molecular guidance cue in cellular migration, and function appears to be mediated by interaction with roundabout homolog receptors. During neural development involved in axonal navigation at the ventral midline of the neural tube and projection of axons to different regions. SLIT1 and SLIT2 seem to be essential for midline guidance in the forebrain by acting as repulsive signal preventing inappropriate midline crossing by axons projecting from the olfactory bulb. In spinal cord development may play a role in guiding commissural axons once they reached the floor plate by modulating the response to netrin. In vitro, silences the attractive effect of NTN1 but not its growth-stimulatory effect and silencing requires the formation of a ROBO1-DCC complex. May be implicated in spinal cord midline post-crossing axon repulsion. In vitro, only commissural axons that crossed the midline responded to SLIT2. In the developing visual system appears to function as repellent for retinal ganglion axons by providing a repulsion that directs these axons along their appropriate paths prior to, and after passage through, the optic chiasm. In vitro, collapses and repels retinal ganglion cell growth cones. Seems to play a role in branching and arborization of CNS sensory axons, and in neuronal cell migration. Seems to be involved in regulating leukocyte migration (By similarity).</text>
</comment>
<comment type="subunit">
    <text evidence="1 4">Homodimer. Binds ROBO1 and ROBO2 with high affinity (By similarity). Interacts with GREM1.</text>
</comment>
<comment type="subcellular location">
    <subcellularLocation>
        <location evidence="1">Secreted</location>
    </subcellularLocation>
</comment>
<comment type="developmental stage">
    <text evidence="3">Detected at 20 dpc, between P0 and P10, and in adult in anterior olfactory nuclei, in cortex entorhinal region, hippocampal C3 and dentate gyrus, basal telencephalon septum, hypothalamus ventromedial and preoptic nuclei and dorsal thalamus medial habenula. Detected at 20 dpc in cortex cortical plate. Detected between P0 and P10, and in adult basal telencephalon amygdaloid complex, and diencephalon pretectum optic tract nuclei.</text>
</comment>
<comment type="sequence caution" evidence="5">
    <conflict type="miscellaneous discrepancy">
        <sequence resource="EMBL-CDS" id="AAD38940"/>
    </conflict>
    <text>Contaminating sequence. Sequence of unknown origin in the C-terminal part.</text>
</comment>
<name>SLIT2_RAT</name>
<protein>
    <recommendedName>
        <fullName>Slit homolog 2 protein</fullName>
        <shortName>Slit-2</shortName>
    </recommendedName>
</protein>
<organism>
    <name type="scientific">Rattus norvegicus</name>
    <name type="common">Rat</name>
    <dbReference type="NCBI Taxonomy" id="10116"/>
    <lineage>
        <taxon>Eukaryota</taxon>
        <taxon>Metazoa</taxon>
        <taxon>Chordata</taxon>
        <taxon>Craniata</taxon>
        <taxon>Vertebrata</taxon>
        <taxon>Euteleostomi</taxon>
        <taxon>Mammalia</taxon>
        <taxon>Eutheria</taxon>
        <taxon>Euarchontoglires</taxon>
        <taxon>Glires</taxon>
        <taxon>Rodentia</taxon>
        <taxon>Myomorpha</taxon>
        <taxon>Muroidea</taxon>
        <taxon>Muridae</taxon>
        <taxon>Murinae</taxon>
        <taxon>Rattus</taxon>
    </lineage>
</organism>
<sequence>MSGIGWQTLSLSLALVLSILNKVAPHACPAQCSCSGSTVDCHGLALRIVPRNIPRNTERLDLNGNNITRITKTDFAGLRHLRILQLMENKISTIERGAFHDLKELERLRLNRNNLQLFPELLFLGTAKLYRLDLSENQIQAIPRKAFRGAVDIKNLQLDYNQISCIEDGAFRALRDLEVLTLNNNNITRLSVASFNHMPKLRTFRLHSNNLYCDCHLAWLSDWLRQRPRVGLYTQCMGPSHLRGHNVAEVQKREFVCSDEEEGHQSFMAPSCSVLHCPIACTCSNNIVDCRGKGLTEIPTNLPETITEIRLEQNSIRVIPPGAFSPYKKLRRLDLSNNQISELAPDAFQGLRSLNSLVLYGNKITELPKSLFEGLFSLQLLLLNANKINCLRVDAFQDLHNLNLLSLYDNKLQTVAKGTFSALRAIQTMHLAQNPFICDCHLKWLADYLHTNPIETSGARCTSPRRLANKRIGQIKSKKFRCSGTEDYRSKLSGDCFADLACPEKCRCEGTTVDCSNQKLNKIPDHIPQYTAELRLNNNEFTVLEATGIFKKLPQLRKINLSNNKITDIEEGAFEGASGVNEILLTSNRLENVQHKMFKGLESLKTLMLRSNRISCVGNDSFTGLGSVRLLSLYDNQITTVAPGAFGTLHSLSTLNLLANPFNCNCHLAWLGEWLRRKRIVTGNPRCQKPYFLKEIPIQDVAIQDFTCDDGNDDNSCSPLSRCPSECTCLDTVVRCSNKGLKVLPKGIPRDVTELYLDGNQFTLVP</sequence>